<reference key="1">
    <citation type="journal article" date="2003" name="J. Bacteriol.">
        <title>Complete genome sequence of the oral pathogenic bacterium Porphyromonas gingivalis strain W83.</title>
        <authorList>
            <person name="Nelson K.E."/>
            <person name="Fleischmann R.D."/>
            <person name="DeBoy R.T."/>
            <person name="Paulsen I.T."/>
            <person name="Fouts D.E."/>
            <person name="Eisen J.A."/>
            <person name="Daugherty S.C."/>
            <person name="Dodson R.J."/>
            <person name="Durkin A.S."/>
            <person name="Gwinn M.L."/>
            <person name="Haft D.H."/>
            <person name="Kolonay J.F."/>
            <person name="Nelson W.C."/>
            <person name="Mason T.M."/>
            <person name="Tallon L."/>
            <person name="Gray J."/>
            <person name="Granger D."/>
            <person name="Tettelin H."/>
            <person name="Dong H."/>
            <person name="Galvin J.L."/>
            <person name="Duncan M.J."/>
            <person name="Dewhirst F.E."/>
            <person name="Fraser C.M."/>
        </authorList>
    </citation>
    <scope>NUCLEOTIDE SEQUENCE [LARGE SCALE GENOMIC DNA]</scope>
    <source>
        <strain>ATCC BAA-308 / W83</strain>
    </source>
</reference>
<gene>
    <name evidence="1" type="primary">nrfA</name>
    <name type="ordered locus">PG_1820</name>
</gene>
<protein>
    <recommendedName>
        <fullName evidence="1">Cytochrome c-552</fullName>
        <ecNumber evidence="1">1.7.2.2</ecNumber>
    </recommendedName>
    <alternativeName>
        <fullName evidence="1">Ammonia-forming cytochrome c nitrite reductase</fullName>
        <shortName evidence="1">Cytochrome c nitrite reductase</shortName>
    </alternativeName>
</protein>
<sequence>MKNKERKLKSWQGWLIFSSSMVVVFCLGLLAASVTERRAEIQSIYANKKDKIAPFEARNEMYRGNYPREYETWTYTADTSFRSEFNGSQAIDVLEQRPNMVIFWAGYAFSRDYTSPRGHMHAIQDMQRTLRTGNPGIDGAGDMQPATCWVCKSPDVPRMMQAIGVDEFYKNKWSSLGSDIVNPIGCADCHDPETMDLHISRPALIEAFQRRGLDITKASHQEMRSLVCAQCHVEYYFKGEGKYLTFPWDKGMTMEDAERYYDEAEYYDYIHTLSRAPILKAQHPDFEISQHGIHAQRGVSCADCHMPYISEGGVKFSDHHITSPLAHMDRTCQTCHRESEEELRKNVYERQRKANEVRNQLENELAKAHLEAQFAWDKGATEKEMTPILKYIRQSQWRWDYGVASHGASFHAPQEITRILSNGLERAMQARIEIARVLARHGYTDEVPLPDVSTKEKAQKYIGLDMDGLHKNKEKFLETVVPKWVKKAKGKGLLIAAK</sequence>
<accession>Q7MTW1</accession>
<evidence type="ECO:0000255" key="1">
    <source>
        <dbReference type="HAMAP-Rule" id="MF_01182"/>
    </source>
</evidence>
<keyword id="KW-0106">Calcium</keyword>
<keyword id="KW-0249">Electron transport</keyword>
<keyword id="KW-0349">Heme</keyword>
<keyword id="KW-0408">Iron</keyword>
<keyword id="KW-0479">Metal-binding</keyword>
<keyword id="KW-0560">Oxidoreductase</keyword>
<keyword id="KW-0574">Periplasm</keyword>
<keyword id="KW-1185">Reference proteome</keyword>
<keyword id="KW-0732">Signal</keyword>
<keyword id="KW-0813">Transport</keyword>
<feature type="signal peptide" evidence="1">
    <location>
        <begin position="1"/>
        <end position="31"/>
    </location>
</feature>
<feature type="chain" id="PRO_0000268971" description="Cytochrome c-552">
    <location>
        <begin position="32"/>
        <end position="498"/>
    </location>
</feature>
<feature type="binding site" description="axial binding residue" evidence="1">
    <location>
        <position position="119"/>
    </location>
    <ligand>
        <name>heme c</name>
        <dbReference type="ChEBI" id="CHEBI:61717"/>
        <label>3</label>
    </ligand>
    <ligandPart>
        <name>Fe</name>
        <dbReference type="ChEBI" id="CHEBI:18248"/>
    </ligandPart>
</feature>
<feature type="binding site" description="covalent" evidence="1">
    <location>
        <position position="148"/>
    </location>
    <ligand>
        <name>heme</name>
        <dbReference type="ChEBI" id="CHEBI:30413"/>
        <label>1</label>
    </ligand>
</feature>
<feature type="binding site" description="covalent" evidence="1">
    <location>
        <position position="151"/>
    </location>
    <ligand>
        <name>heme</name>
        <dbReference type="ChEBI" id="CHEBI:30413"/>
        <label>1</label>
    </ligand>
</feature>
<feature type="binding site" description="axial binding residue" evidence="1">
    <location>
        <position position="152"/>
    </location>
    <ligand>
        <name>heme</name>
        <dbReference type="ChEBI" id="CHEBI:30413"/>
        <label>1</label>
    </ligand>
    <ligandPart>
        <name>Fe</name>
        <dbReference type="ChEBI" id="CHEBI:18248"/>
    </ligandPart>
</feature>
<feature type="binding site" description="covalent" evidence="1">
    <location>
        <position position="186"/>
    </location>
    <ligand>
        <name>heme c</name>
        <dbReference type="ChEBI" id="CHEBI:61717"/>
        <label>2</label>
    </ligand>
</feature>
<feature type="binding site" description="covalent" evidence="1">
    <location>
        <position position="189"/>
    </location>
    <ligand>
        <name>heme c</name>
        <dbReference type="ChEBI" id="CHEBI:61717"/>
        <label>2</label>
    </ligand>
</feature>
<feature type="binding site" description="axial binding residue" evidence="1">
    <location>
        <position position="190"/>
    </location>
    <ligand>
        <name>heme c</name>
        <dbReference type="ChEBI" id="CHEBI:61717"/>
        <label>2</label>
    </ligand>
    <ligandPart>
        <name>Fe</name>
        <dbReference type="ChEBI" id="CHEBI:18248"/>
    </ligandPart>
</feature>
<feature type="binding site" description="covalent" evidence="1">
    <location>
        <position position="228"/>
    </location>
    <ligand>
        <name>heme c</name>
        <dbReference type="ChEBI" id="CHEBI:61717"/>
        <label>3</label>
    </ligand>
</feature>
<feature type="binding site" description="covalent" evidence="1">
    <location>
        <position position="231"/>
    </location>
    <ligand>
        <name>heme c</name>
        <dbReference type="ChEBI" id="CHEBI:61717"/>
        <label>3</label>
    </ligand>
</feature>
<feature type="binding site" description="axial binding residue" evidence="1">
    <location>
        <position position="232"/>
    </location>
    <ligand>
        <name>heme c</name>
        <dbReference type="ChEBI" id="CHEBI:61717"/>
        <label>3</label>
    </ligand>
    <ligandPart>
        <name>Fe</name>
        <dbReference type="ChEBI" id="CHEBI:18248"/>
    </ligandPart>
</feature>
<feature type="binding site" evidence="1">
    <location>
        <position position="234"/>
    </location>
    <ligand>
        <name>Ca(2+)</name>
        <dbReference type="ChEBI" id="CHEBI:29108"/>
    </ligand>
</feature>
<feature type="binding site" evidence="1">
    <location>
        <position position="235"/>
    </location>
    <ligand>
        <name>Ca(2+)</name>
        <dbReference type="ChEBI" id="CHEBI:29108"/>
    </ligand>
</feature>
<feature type="binding site" evidence="1">
    <location>
        <position position="235"/>
    </location>
    <ligand>
        <name>substrate</name>
    </ligand>
</feature>
<feature type="binding site" evidence="1">
    <location>
        <position position="280"/>
    </location>
    <ligand>
        <name>Ca(2+)</name>
        <dbReference type="ChEBI" id="CHEBI:29108"/>
    </ligand>
</feature>
<feature type="binding site" evidence="1">
    <location>
        <position position="282"/>
    </location>
    <ligand>
        <name>Ca(2+)</name>
        <dbReference type="ChEBI" id="CHEBI:29108"/>
    </ligand>
</feature>
<feature type="binding site" evidence="1">
    <location>
        <position position="283"/>
    </location>
    <ligand>
        <name>substrate</name>
    </ligand>
</feature>
<feature type="binding site" description="axial binding residue" evidence="1">
    <location>
        <position position="294"/>
    </location>
    <ligand>
        <name>heme c</name>
        <dbReference type="ChEBI" id="CHEBI:61717"/>
        <label>5</label>
    </ligand>
    <ligandPart>
        <name>Fe</name>
        <dbReference type="ChEBI" id="CHEBI:18248"/>
    </ligandPart>
</feature>
<feature type="binding site" description="covalent" evidence="1">
    <location>
        <position position="301"/>
    </location>
    <ligand>
        <name>heme c</name>
        <dbReference type="ChEBI" id="CHEBI:61717"/>
        <label>4</label>
    </ligand>
</feature>
<feature type="binding site" description="covalent" evidence="1">
    <location>
        <position position="304"/>
    </location>
    <ligand>
        <name>heme c</name>
        <dbReference type="ChEBI" id="CHEBI:61717"/>
        <label>4</label>
    </ligand>
</feature>
<feature type="binding site" description="axial binding residue" evidence="1">
    <location>
        <position position="305"/>
    </location>
    <ligand>
        <name>heme c</name>
        <dbReference type="ChEBI" id="CHEBI:61717"/>
        <label>4</label>
    </ligand>
    <ligandPart>
        <name>Fe</name>
        <dbReference type="ChEBI" id="CHEBI:18248"/>
    </ligandPart>
</feature>
<feature type="binding site" description="axial binding residue" evidence="1">
    <location>
        <position position="319"/>
    </location>
    <ligand>
        <name>heme c</name>
        <dbReference type="ChEBI" id="CHEBI:61717"/>
        <label>2</label>
    </ligand>
    <ligandPart>
        <name>Fe</name>
        <dbReference type="ChEBI" id="CHEBI:18248"/>
    </ligandPart>
</feature>
<feature type="binding site" description="covalent" evidence="1">
    <location>
        <position position="332"/>
    </location>
    <ligand>
        <name>heme c</name>
        <dbReference type="ChEBI" id="CHEBI:61717"/>
        <label>5</label>
    </ligand>
</feature>
<feature type="binding site" description="covalent" evidence="1">
    <location>
        <position position="335"/>
    </location>
    <ligand>
        <name>heme c</name>
        <dbReference type="ChEBI" id="CHEBI:61717"/>
        <label>5</label>
    </ligand>
</feature>
<feature type="binding site" description="axial binding residue" evidence="1">
    <location>
        <position position="336"/>
    </location>
    <ligand>
        <name>heme c</name>
        <dbReference type="ChEBI" id="CHEBI:61717"/>
        <label>5</label>
    </ligand>
    <ligandPart>
        <name>Fe</name>
        <dbReference type="ChEBI" id="CHEBI:18248"/>
    </ligandPart>
</feature>
<feature type="binding site" description="axial binding residue" evidence="1">
    <location>
        <position position="411"/>
    </location>
    <ligand>
        <name>heme c</name>
        <dbReference type="ChEBI" id="CHEBI:61717"/>
        <label>4</label>
    </ligand>
    <ligandPart>
        <name>Fe</name>
        <dbReference type="ChEBI" id="CHEBI:18248"/>
    </ligandPart>
</feature>
<comment type="function">
    <text evidence="1">Catalyzes the reduction of nitrite to ammonia, consuming six electrons in the process.</text>
</comment>
<comment type="catalytic activity">
    <reaction evidence="1">
        <text>6 Fe(III)-[cytochrome c] + NH4(+) + 2 H2O = 6 Fe(II)-[cytochrome c] + nitrite + 8 H(+)</text>
        <dbReference type="Rhea" id="RHEA:13089"/>
        <dbReference type="Rhea" id="RHEA-COMP:10350"/>
        <dbReference type="Rhea" id="RHEA-COMP:14399"/>
        <dbReference type="ChEBI" id="CHEBI:15377"/>
        <dbReference type="ChEBI" id="CHEBI:15378"/>
        <dbReference type="ChEBI" id="CHEBI:16301"/>
        <dbReference type="ChEBI" id="CHEBI:28938"/>
        <dbReference type="ChEBI" id="CHEBI:29033"/>
        <dbReference type="ChEBI" id="CHEBI:29034"/>
        <dbReference type="EC" id="1.7.2.2"/>
    </reaction>
</comment>
<comment type="cofactor">
    <cofactor evidence="1">
        <name>Ca(2+)</name>
        <dbReference type="ChEBI" id="CHEBI:29108"/>
    </cofactor>
    <text evidence="1">Binds 1 Ca(2+) ion per monomer.</text>
</comment>
<comment type="cofactor">
    <cofactor evidence="1">
        <name>heme c</name>
        <dbReference type="ChEBI" id="CHEBI:61717"/>
    </cofactor>
    <text evidence="1">Binds 5 heme c groups covalently per monomer.</text>
</comment>
<comment type="pathway">
    <text evidence="1">Nitrogen metabolism; nitrate reduction (assimilation).</text>
</comment>
<comment type="subcellular location">
    <subcellularLocation>
        <location evidence="1">Periplasm</location>
    </subcellularLocation>
</comment>
<comment type="similarity">
    <text evidence="1">Belongs to the cytochrome c-552 family.</text>
</comment>
<organism>
    <name type="scientific">Porphyromonas gingivalis (strain ATCC BAA-308 / W83)</name>
    <dbReference type="NCBI Taxonomy" id="242619"/>
    <lineage>
        <taxon>Bacteria</taxon>
        <taxon>Pseudomonadati</taxon>
        <taxon>Bacteroidota</taxon>
        <taxon>Bacteroidia</taxon>
        <taxon>Bacteroidales</taxon>
        <taxon>Porphyromonadaceae</taxon>
        <taxon>Porphyromonas</taxon>
    </lineage>
</organism>
<dbReference type="EC" id="1.7.2.2" evidence="1"/>
<dbReference type="EMBL" id="AE015924">
    <property type="protein sequence ID" value="AAQ66818.1"/>
    <property type="molecule type" value="Genomic_DNA"/>
</dbReference>
<dbReference type="RefSeq" id="WP_004583462.1">
    <property type="nucleotide sequence ID" value="NC_002950.2"/>
</dbReference>
<dbReference type="SMR" id="Q7MTW1"/>
<dbReference type="STRING" id="242619.PG_1820"/>
<dbReference type="EnsemblBacteria" id="AAQ66818">
    <property type="protein sequence ID" value="AAQ66818"/>
    <property type="gene ID" value="PG_1820"/>
</dbReference>
<dbReference type="KEGG" id="pgi:PG_1820"/>
<dbReference type="eggNOG" id="COG3303">
    <property type="taxonomic scope" value="Bacteria"/>
</dbReference>
<dbReference type="HOGENOM" id="CLU_035040_1_0_10"/>
<dbReference type="UniPathway" id="UPA00653"/>
<dbReference type="Proteomes" id="UP000000588">
    <property type="component" value="Chromosome"/>
</dbReference>
<dbReference type="GO" id="GO:0030288">
    <property type="term" value="C:outer membrane-bounded periplasmic space"/>
    <property type="evidence" value="ECO:0007669"/>
    <property type="project" value="TreeGrafter"/>
</dbReference>
<dbReference type="GO" id="GO:0005509">
    <property type="term" value="F:calcium ion binding"/>
    <property type="evidence" value="ECO:0007669"/>
    <property type="project" value="UniProtKB-UniRule"/>
</dbReference>
<dbReference type="GO" id="GO:0020037">
    <property type="term" value="F:heme binding"/>
    <property type="evidence" value="ECO:0007669"/>
    <property type="project" value="InterPro"/>
</dbReference>
<dbReference type="GO" id="GO:0005506">
    <property type="term" value="F:iron ion binding"/>
    <property type="evidence" value="ECO:0007669"/>
    <property type="project" value="UniProtKB-UniRule"/>
</dbReference>
<dbReference type="GO" id="GO:0042279">
    <property type="term" value="F:nitrite reductase (cytochrome, ammonia-forming) activity"/>
    <property type="evidence" value="ECO:0007669"/>
    <property type="project" value="UniProtKB-UniRule"/>
</dbReference>
<dbReference type="GO" id="GO:0019645">
    <property type="term" value="P:anaerobic electron transport chain"/>
    <property type="evidence" value="ECO:0007669"/>
    <property type="project" value="TreeGrafter"/>
</dbReference>
<dbReference type="GO" id="GO:0042128">
    <property type="term" value="P:nitrate assimilation"/>
    <property type="evidence" value="ECO:0007669"/>
    <property type="project" value="UniProtKB-UniRule"/>
</dbReference>
<dbReference type="CDD" id="cd00548">
    <property type="entry name" value="NrfA-like"/>
    <property type="match status" value="1"/>
</dbReference>
<dbReference type="FunFam" id="1.20.140.10:FF:000014">
    <property type="entry name" value="Cytochrome c-552"/>
    <property type="match status" value="1"/>
</dbReference>
<dbReference type="Gene3D" id="1.20.140.10">
    <property type="entry name" value="Butyryl-CoA Dehydrogenase, subunit A, domain 3"/>
    <property type="match status" value="1"/>
</dbReference>
<dbReference type="Gene3D" id="1.10.1130.10">
    <property type="entry name" value="Flavocytochrome C3, Chain A"/>
    <property type="match status" value="1"/>
</dbReference>
<dbReference type="HAMAP" id="MF_01182">
    <property type="entry name" value="Cytochrom_C552"/>
    <property type="match status" value="1"/>
</dbReference>
<dbReference type="InterPro" id="IPR003321">
    <property type="entry name" value="Cyt_c552"/>
</dbReference>
<dbReference type="InterPro" id="IPR017570">
    <property type="entry name" value="Cyt_c_NO2Rdtase_formate-dep"/>
</dbReference>
<dbReference type="InterPro" id="IPR036280">
    <property type="entry name" value="Multihaem_cyt_sf"/>
</dbReference>
<dbReference type="NCBIfam" id="NF008339">
    <property type="entry name" value="PRK11125.1"/>
    <property type="match status" value="1"/>
</dbReference>
<dbReference type="PANTHER" id="PTHR30633:SF0">
    <property type="entry name" value="CYTOCHROME C-552"/>
    <property type="match status" value="1"/>
</dbReference>
<dbReference type="PANTHER" id="PTHR30633">
    <property type="entry name" value="CYTOCHROME C-552 RESPIRATORY NITRITE REDUCTASE"/>
    <property type="match status" value="1"/>
</dbReference>
<dbReference type="Pfam" id="PF02335">
    <property type="entry name" value="Cytochrom_C552"/>
    <property type="match status" value="1"/>
</dbReference>
<dbReference type="PIRSF" id="PIRSF000243">
    <property type="entry name" value="Cyt_c552"/>
    <property type="match status" value="1"/>
</dbReference>
<dbReference type="SUPFAM" id="SSF48695">
    <property type="entry name" value="Multiheme cytochromes"/>
    <property type="match status" value="1"/>
</dbReference>
<dbReference type="PROSITE" id="PS51008">
    <property type="entry name" value="MULTIHEME_CYTC"/>
    <property type="match status" value="1"/>
</dbReference>
<name>NRFA_PORGI</name>
<proteinExistence type="inferred from homology"/>